<feature type="chain" id="PRO_0000144355" description="ATP synthase subunit alpha">
    <location>
        <begin position="1"/>
        <end position="502"/>
    </location>
</feature>
<feature type="binding site" evidence="1">
    <location>
        <begin position="169"/>
        <end position="176"/>
    </location>
    <ligand>
        <name>ATP</name>
        <dbReference type="ChEBI" id="CHEBI:30616"/>
    </ligand>
</feature>
<feature type="site" description="Required for activity" evidence="1">
    <location>
        <position position="362"/>
    </location>
</feature>
<gene>
    <name evidence="1" type="primary">atpA</name>
    <name type="ordered locus">MW2029</name>
</gene>
<dbReference type="EC" id="7.1.2.2" evidence="1"/>
<dbReference type="EMBL" id="BA000033">
    <property type="protein sequence ID" value="BAB95894.1"/>
    <property type="molecule type" value="Genomic_DNA"/>
</dbReference>
<dbReference type="RefSeq" id="WP_000974881.1">
    <property type="nucleotide sequence ID" value="NC_003923.1"/>
</dbReference>
<dbReference type="SMR" id="P63676"/>
<dbReference type="KEGG" id="sam:MW2029"/>
<dbReference type="HOGENOM" id="CLU_010091_2_1_9"/>
<dbReference type="GO" id="GO:0005886">
    <property type="term" value="C:plasma membrane"/>
    <property type="evidence" value="ECO:0007669"/>
    <property type="project" value="UniProtKB-SubCell"/>
</dbReference>
<dbReference type="GO" id="GO:0045259">
    <property type="term" value="C:proton-transporting ATP synthase complex"/>
    <property type="evidence" value="ECO:0007669"/>
    <property type="project" value="UniProtKB-KW"/>
</dbReference>
<dbReference type="GO" id="GO:0043531">
    <property type="term" value="F:ADP binding"/>
    <property type="evidence" value="ECO:0007669"/>
    <property type="project" value="TreeGrafter"/>
</dbReference>
<dbReference type="GO" id="GO:0005524">
    <property type="term" value="F:ATP binding"/>
    <property type="evidence" value="ECO:0007669"/>
    <property type="project" value="UniProtKB-UniRule"/>
</dbReference>
<dbReference type="GO" id="GO:0046933">
    <property type="term" value="F:proton-transporting ATP synthase activity, rotational mechanism"/>
    <property type="evidence" value="ECO:0007669"/>
    <property type="project" value="UniProtKB-UniRule"/>
</dbReference>
<dbReference type="CDD" id="cd18113">
    <property type="entry name" value="ATP-synt_F1_alpha_C"/>
    <property type="match status" value="1"/>
</dbReference>
<dbReference type="CDD" id="cd18116">
    <property type="entry name" value="ATP-synt_F1_alpha_N"/>
    <property type="match status" value="1"/>
</dbReference>
<dbReference type="CDD" id="cd01132">
    <property type="entry name" value="F1-ATPase_alpha_CD"/>
    <property type="match status" value="1"/>
</dbReference>
<dbReference type="FunFam" id="1.20.150.20:FF:000001">
    <property type="entry name" value="ATP synthase subunit alpha"/>
    <property type="match status" value="1"/>
</dbReference>
<dbReference type="FunFam" id="2.40.30.20:FF:000001">
    <property type="entry name" value="ATP synthase subunit alpha"/>
    <property type="match status" value="1"/>
</dbReference>
<dbReference type="FunFam" id="3.40.50.300:FF:000002">
    <property type="entry name" value="ATP synthase subunit alpha"/>
    <property type="match status" value="1"/>
</dbReference>
<dbReference type="Gene3D" id="2.40.30.20">
    <property type="match status" value="1"/>
</dbReference>
<dbReference type="Gene3D" id="1.20.150.20">
    <property type="entry name" value="ATP synthase alpha/beta chain, C-terminal domain"/>
    <property type="match status" value="1"/>
</dbReference>
<dbReference type="Gene3D" id="3.40.50.300">
    <property type="entry name" value="P-loop containing nucleotide triphosphate hydrolases"/>
    <property type="match status" value="1"/>
</dbReference>
<dbReference type="HAMAP" id="MF_01346">
    <property type="entry name" value="ATP_synth_alpha_bact"/>
    <property type="match status" value="1"/>
</dbReference>
<dbReference type="InterPro" id="IPR023366">
    <property type="entry name" value="ATP_synth_asu-like_sf"/>
</dbReference>
<dbReference type="InterPro" id="IPR000793">
    <property type="entry name" value="ATP_synth_asu_C"/>
</dbReference>
<dbReference type="InterPro" id="IPR038376">
    <property type="entry name" value="ATP_synth_asu_C_sf"/>
</dbReference>
<dbReference type="InterPro" id="IPR033732">
    <property type="entry name" value="ATP_synth_F1_a_nt-bd_dom"/>
</dbReference>
<dbReference type="InterPro" id="IPR005294">
    <property type="entry name" value="ATP_synth_F1_asu"/>
</dbReference>
<dbReference type="InterPro" id="IPR020003">
    <property type="entry name" value="ATPase_a/bsu_AS"/>
</dbReference>
<dbReference type="InterPro" id="IPR004100">
    <property type="entry name" value="ATPase_F1/V1/A1_a/bsu_N"/>
</dbReference>
<dbReference type="InterPro" id="IPR036121">
    <property type="entry name" value="ATPase_F1/V1/A1_a/bsu_N_sf"/>
</dbReference>
<dbReference type="InterPro" id="IPR000194">
    <property type="entry name" value="ATPase_F1/V1/A1_a/bsu_nucl-bd"/>
</dbReference>
<dbReference type="InterPro" id="IPR027417">
    <property type="entry name" value="P-loop_NTPase"/>
</dbReference>
<dbReference type="NCBIfam" id="TIGR00962">
    <property type="entry name" value="atpA"/>
    <property type="match status" value="1"/>
</dbReference>
<dbReference type="NCBIfam" id="NF009884">
    <property type="entry name" value="PRK13343.1"/>
    <property type="match status" value="1"/>
</dbReference>
<dbReference type="PANTHER" id="PTHR48082">
    <property type="entry name" value="ATP SYNTHASE SUBUNIT ALPHA, MITOCHONDRIAL"/>
    <property type="match status" value="1"/>
</dbReference>
<dbReference type="PANTHER" id="PTHR48082:SF2">
    <property type="entry name" value="ATP SYNTHASE SUBUNIT ALPHA, MITOCHONDRIAL"/>
    <property type="match status" value="1"/>
</dbReference>
<dbReference type="Pfam" id="PF00006">
    <property type="entry name" value="ATP-synt_ab"/>
    <property type="match status" value="1"/>
</dbReference>
<dbReference type="Pfam" id="PF00306">
    <property type="entry name" value="ATP-synt_ab_C"/>
    <property type="match status" value="1"/>
</dbReference>
<dbReference type="Pfam" id="PF02874">
    <property type="entry name" value="ATP-synt_ab_N"/>
    <property type="match status" value="1"/>
</dbReference>
<dbReference type="PIRSF" id="PIRSF039088">
    <property type="entry name" value="F_ATPase_subunit_alpha"/>
    <property type="match status" value="1"/>
</dbReference>
<dbReference type="SUPFAM" id="SSF47917">
    <property type="entry name" value="C-terminal domain of alpha and beta subunits of F1 ATP synthase"/>
    <property type="match status" value="1"/>
</dbReference>
<dbReference type="SUPFAM" id="SSF50615">
    <property type="entry name" value="N-terminal domain of alpha and beta subunits of F1 ATP synthase"/>
    <property type="match status" value="1"/>
</dbReference>
<dbReference type="SUPFAM" id="SSF52540">
    <property type="entry name" value="P-loop containing nucleoside triphosphate hydrolases"/>
    <property type="match status" value="1"/>
</dbReference>
<dbReference type="PROSITE" id="PS00152">
    <property type="entry name" value="ATPASE_ALPHA_BETA"/>
    <property type="match status" value="1"/>
</dbReference>
<organism>
    <name type="scientific">Staphylococcus aureus (strain MW2)</name>
    <dbReference type="NCBI Taxonomy" id="196620"/>
    <lineage>
        <taxon>Bacteria</taxon>
        <taxon>Bacillati</taxon>
        <taxon>Bacillota</taxon>
        <taxon>Bacilli</taxon>
        <taxon>Bacillales</taxon>
        <taxon>Staphylococcaceae</taxon>
        <taxon>Staphylococcus</taxon>
    </lineage>
</organism>
<proteinExistence type="inferred from homology"/>
<reference key="1">
    <citation type="journal article" date="2002" name="Lancet">
        <title>Genome and virulence determinants of high virulence community-acquired MRSA.</title>
        <authorList>
            <person name="Baba T."/>
            <person name="Takeuchi F."/>
            <person name="Kuroda M."/>
            <person name="Yuzawa H."/>
            <person name="Aoki K."/>
            <person name="Oguchi A."/>
            <person name="Nagai Y."/>
            <person name="Iwama N."/>
            <person name="Asano K."/>
            <person name="Naimi T."/>
            <person name="Kuroda H."/>
            <person name="Cui L."/>
            <person name="Yamamoto K."/>
            <person name="Hiramatsu K."/>
        </authorList>
    </citation>
    <scope>NUCLEOTIDE SEQUENCE [LARGE SCALE GENOMIC DNA]</scope>
    <source>
        <strain>MW2</strain>
    </source>
</reference>
<protein>
    <recommendedName>
        <fullName evidence="1">ATP synthase subunit alpha</fullName>
        <ecNumber evidence="1">7.1.2.2</ecNumber>
    </recommendedName>
    <alternativeName>
        <fullName evidence="1">ATP synthase F1 sector subunit alpha</fullName>
    </alternativeName>
    <alternativeName>
        <fullName evidence="1">F-ATPase subunit alpha</fullName>
    </alternativeName>
</protein>
<name>ATPA_STAAW</name>
<evidence type="ECO:0000255" key="1">
    <source>
        <dbReference type="HAMAP-Rule" id="MF_01346"/>
    </source>
</evidence>
<sequence length="502" mass="54584">MAIKAEEISALLRSQIENYESEMSVTDVGTVLQIGDGIALIHGLNDVMAGELVEFHNGVLGLAQNLEESNVGVVILGPYTGITEGDEVKRTGRIMEVPVGEELIGRVVNPLGQPIDGQGPINTTKTRPVEKKATGVMDRKSVDEPLQTGIKAIDALVPIGRGQRELIIGDRQTGKTTIAIDTILNQKDQGTICIYVAIGQKDSTVRANVEKLRQAGALDYTIVVAASASEPSPLLYIAPYSGVTMGEEFMFNGKHVLIVYDDLTKQAAAYRELSLLLRRPPGREAYPGDVFYLHSRLLERAAKLNDDLGGGSITALPIIETQAGDISAYVPTNVISITDGQIFLQSDLFFSGVRPAINAGQSVSRVGGSAQIKAMKKVAGTLRLDLASYRELESFAQFGSDLDEFTASKLERGKRTVEVLKQDQNKPLPVEHQVLIIYALTKGYLDDIPVVDITRFEDELNHWAESNATELLNEIRETGGLPDAEKFDTAINEFKKSFSKSE</sequence>
<keyword id="KW-0066">ATP synthesis</keyword>
<keyword id="KW-0067">ATP-binding</keyword>
<keyword id="KW-1003">Cell membrane</keyword>
<keyword id="KW-0139">CF(1)</keyword>
<keyword id="KW-0375">Hydrogen ion transport</keyword>
<keyword id="KW-0406">Ion transport</keyword>
<keyword id="KW-0472">Membrane</keyword>
<keyword id="KW-0547">Nucleotide-binding</keyword>
<keyword id="KW-1278">Translocase</keyword>
<keyword id="KW-0813">Transport</keyword>
<comment type="function">
    <text evidence="1">Produces ATP from ADP in the presence of a proton gradient across the membrane. The alpha chain is a regulatory subunit.</text>
</comment>
<comment type="catalytic activity">
    <reaction evidence="1">
        <text>ATP + H2O + 4 H(+)(in) = ADP + phosphate + 5 H(+)(out)</text>
        <dbReference type="Rhea" id="RHEA:57720"/>
        <dbReference type="ChEBI" id="CHEBI:15377"/>
        <dbReference type="ChEBI" id="CHEBI:15378"/>
        <dbReference type="ChEBI" id="CHEBI:30616"/>
        <dbReference type="ChEBI" id="CHEBI:43474"/>
        <dbReference type="ChEBI" id="CHEBI:456216"/>
        <dbReference type="EC" id="7.1.2.2"/>
    </reaction>
</comment>
<comment type="subunit">
    <text evidence="1">F-type ATPases have 2 components, CF(1) - the catalytic core - and CF(0) - the membrane proton channel. CF(1) has five subunits: alpha(3), beta(3), gamma(1), delta(1), epsilon(1). CF(0) has three main subunits: a(1), b(2) and c(9-12). The alpha and beta chains form an alternating ring which encloses part of the gamma chain. CF(1) is attached to CF(0) by a central stalk formed by the gamma and epsilon chains, while a peripheral stalk is formed by the delta and b chains.</text>
</comment>
<comment type="subcellular location">
    <subcellularLocation>
        <location evidence="1">Cell membrane</location>
        <topology evidence="1">Peripheral membrane protein</topology>
    </subcellularLocation>
</comment>
<comment type="similarity">
    <text evidence="1">Belongs to the ATPase alpha/beta chains family.</text>
</comment>
<accession>P63676</accession>
<accession>Q99SF3</accession>